<gene>
    <name evidence="1" type="primary">rpsF</name>
    <name type="ordered locus">LAR_0007</name>
</gene>
<reference key="1">
    <citation type="journal article" date="2008" name="DNA Res.">
        <title>Comparative genome analysis of Lactobacillus reuteri and Lactobacillus fermentum reveal a genomic island for reuterin and cobalamin production.</title>
        <authorList>
            <person name="Morita H."/>
            <person name="Toh H."/>
            <person name="Fukuda S."/>
            <person name="Horikawa H."/>
            <person name="Oshima K."/>
            <person name="Suzuki T."/>
            <person name="Murakami M."/>
            <person name="Hisamatsu S."/>
            <person name="Kato Y."/>
            <person name="Takizawa T."/>
            <person name="Fukuoka H."/>
            <person name="Yoshimura T."/>
            <person name="Itoh K."/>
            <person name="O'Sullivan D.J."/>
            <person name="McKay L.L."/>
            <person name="Ohno H."/>
            <person name="Kikuchi J."/>
            <person name="Masaoka T."/>
            <person name="Hattori M."/>
        </authorList>
    </citation>
    <scope>NUCLEOTIDE SEQUENCE [LARGE SCALE GENOMIC DNA]</scope>
    <source>
        <strain>JCM 1112</strain>
    </source>
</reference>
<comment type="function">
    <text evidence="1">Binds together with bS18 to 16S ribosomal RNA.</text>
</comment>
<comment type="similarity">
    <text evidence="1">Belongs to the bacterial ribosomal protein bS6 family.</text>
</comment>
<keyword id="KW-0687">Ribonucleoprotein</keyword>
<keyword id="KW-0689">Ribosomal protein</keyword>
<keyword id="KW-0694">RNA-binding</keyword>
<keyword id="KW-0699">rRNA-binding</keyword>
<proteinExistence type="inferred from homology"/>
<evidence type="ECO:0000255" key="1">
    <source>
        <dbReference type="HAMAP-Rule" id="MF_00360"/>
    </source>
</evidence>
<evidence type="ECO:0000305" key="2"/>
<sequence>METRKYEITYIIRPDIEESAKSELVDRFDKILADNGATIADSKDWSTRRFAYPIAKYTEGTYHVVNLTTDSDQALNEFDRLAKFSDDILRHMIVKLDA</sequence>
<feature type="chain" id="PRO_1000120767" description="Small ribosomal subunit protein bS6">
    <location>
        <begin position="1"/>
        <end position="98"/>
    </location>
</feature>
<dbReference type="EMBL" id="AP007281">
    <property type="protein sequence ID" value="BAG24523.1"/>
    <property type="molecule type" value="Genomic_DNA"/>
</dbReference>
<dbReference type="RefSeq" id="WP_003665235.1">
    <property type="nucleotide sequence ID" value="NC_010609.1"/>
</dbReference>
<dbReference type="SMR" id="B2G4Z1"/>
<dbReference type="GeneID" id="77191350"/>
<dbReference type="KEGG" id="lrf:LAR_0007"/>
<dbReference type="HOGENOM" id="CLU_113441_5_3_9"/>
<dbReference type="GO" id="GO:0005737">
    <property type="term" value="C:cytoplasm"/>
    <property type="evidence" value="ECO:0007669"/>
    <property type="project" value="UniProtKB-ARBA"/>
</dbReference>
<dbReference type="GO" id="GO:1990904">
    <property type="term" value="C:ribonucleoprotein complex"/>
    <property type="evidence" value="ECO:0007669"/>
    <property type="project" value="UniProtKB-KW"/>
</dbReference>
<dbReference type="GO" id="GO:0005840">
    <property type="term" value="C:ribosome"/>
    <property type="evidence" value="ECO:0007669"/>
    <property type="project" value="UniProtKB-KW"/>
</dbReference>
<dbReference type="GO" id="GO:0070181">
    <property type="term" value="F:small ribosomal subunit rRNA binding"/>
    <property type="evidence" value="ECO:0007669"/>
    <property type="project" value="TreeGrafter"/>
</dbReference>
<dbReference type="GO" id="GO:0003735">
    <property type="term" value="F:structural constituent of ribosome"/>
    <property type="evidence" value="ECO:0007669"/>
    <property type="project" value="InterPro"/>
</dbReference>
<dbReference type="GO" id="GO:0006412">
    <property type="term" value="P:translation"/>
    <property type="evidence" value="ECO:0007669"/>
    <property type="project" value="UniProtKB-UniRule"/>
</dbReference>
<dbReference type="CDD" id="cd00473">
    <property type="entry name" value="bS6"/>
    <property type="match status" value="1"/>
</dbReference>
<dbReference type="FunFam" id="3.30.70.60:FF:000002">
    <property type="entry name" value="30S ribosomal protein S6"/>
    <property type="match status" value="1"/>
</dbReference>
<dbReference type="Gene3D" id="3.30.70.60">
    <property type="match status" value="1"/>
</dbReference>
<dbReference type="HAMAP" id="MF_00360">
    <property type="entry name" value="Ribosomal_bS6"/>
    <property type="match status" value="1"/>
</dbReference>
<dbReference type="InterPro" id="IPR000529">
    <property type="entry name" value="Ribosomal_bS6"/>
</dbReference>
<dbReference type="InterPro" id="IPR035980">
    <property type="entry name" value="Ribosomal_bS6_sf"/>
</dbReference>
<dbReference type="InterPro" id="IPR020814">
    <property type="entry name" value="Ribosomal_S6_plastid/chlpt"/>
</dbReference>
<dbReference type="InterPro" id="IPR014717">
    <property type="entry name" value="Transl_elong_EF1B/ribsomal_bS6"/>
</dbReference>
<dbReference type="NCBIfam" id="TIGR00166">
    <property type="entry name" value="S6"/>
    <property type="match status" value="1"/>
</dbReference>
<dbReference type="PANTHER" id="PTHR21011">
    <property type="entry name" value="MITOCHONDRIAL 28S RIBOSOMAL PROTEIN S6"/>
    <property type="match status" value="1"/>
</dbReference>
<dbReference type="PANTHER" id="PTHR21011:SF1">
    <property type="entry name" value="SMALL RIBOSOMAL SUBUNIT PROTEIN BS6M"/>
    <property type="match status" value="1"/>
</dbReference>
<dbReference type="Pfam" id="PF01250">
    <property type="entry name" value="Ribosomal_S6"/>
    <property type="match status" value="1"/>
</dbReference>
<dbReference type="SUPFAM" id="SSF54995">
    <property type="entry name" value="Ribosomal protein S6"/>
    <property type="match status" value="1"/>
</dbReference>
<name>RS6_LIMRJ</name>
<organism>
    <name type="scientific">Limosilactobacillus reuteri subsp. reuteri (strain JCM 1112)</name>
    <name type="common">Lactobacillus reuteri</name>
    <dbReference type="NCBI Taxonomy" id="557433"/>
    <lineage>
        <taxon>Bacteria</taxon>
        <taxon>Bacillati</taxon>
        <taxon>Bacillota</taxon>
        <taxon>Bacilli</taxon>
        <taxon>Lactobacillales</taxon>
        <taxon>Lactobacillaceae</taxon>
        <taxon>Limosilactobacillus</taxon>
    </lineage>
</organism>
<accession>B2G4Z1</accession>
<protein>
    <recommendedName>
        <fullName evidence="1">Small ribosomal subunit protein bS6</fullName>
    </recommendedName>
    <alternativeName>
        <fullName evidence="2">30S ribosomal protein S6</fullName>
    </alternativeName>
</protein>